<reference key="1">
    <citation type="submission" date="2005-09" db="EMBL/GenBank/DDBJ databases">
        <title>Bovine genome sequencing program: full-length cDNA sequencing.</title>
        <authorList>
            <person name="Moore S.S."/>
            <person name="Alexander L."/>
            <person name="Brownstein M."/>
            <person name="Guan L."/>
            <person name="Lobo S."/>
            <person name="Meng Y."/>
            <person name="Tanaguchi M."/>
            <person name="Wang Z."/>
            <person name="Yu J."/>
            <person name="Prange C."/>
            <person name="Schreiber K."/>
            <person name="Shenmen C."/>
            <person name="Wagner L."/>
            <person name="Bala M."/>
            <person name="Barbazuk S."/>
            <person name="Barber S."/>
            <person name="Babakaiff R."/>
            <person name="Beland J."/>
            <person name="Chun E."/>
            <person name="Del Rio L."/>
            <person name="Gibson S."/>
            <person name="Hanson R."/>
            <person name="Kirkpatrick R."/>
            <person name="Liu J."/>
            <person name="Matsuo C."/>
            <person name="Mayo M."/>
            <person name="Santos R.R."/>
            <person name="Stott J."/>
            <person name="Tsai M."/>
            <person name="Wong D."/>
            <person name="Siddiqui A."/>
            <person name="Holt R."/>
            <person name="Jones S.J."/>
            <person name="Marra M.A."/>
        </authorList>
    </citation>
    <scope>NUCLEOTIDE SEQUENCE [LARGE SCALE MRNA] OF 1-253 (ISOFORM 1)</scope>
    <source>
        <strain>Hereford</strain>
        <tissue>Testis</tissue>
    </source>
</reference>
<reference key="2">
    <citation type="submission" date="2007-07" db="EMBL/GenBank/DDBJ databases">
        <authorList>
            <consortium name="NIH - Mammalian Gene Collection (MGC) project"/>
        </authorList>
    </citation>
    <scope>NUCLEOTIDE SEQUENCE [LARGE SCALE MRNA] (ISOFORM 2)</scope>
    <source>
        <strain>Crossbred X Angus</strain>
        <tissue>Liver</tissue>
    </source>
</reference>
<keyword id="KW-0025">Alternative splicing</keyword>
<keyword id="KW-0175">Coiled coil</keyword>
<keyword id="KW-0597">Phosphoprotein</keyword>
<keyword id="KW-1185">Reference proteome</keyword>
<organism>
    <name type="scientific">Bos taurus</name>
    <name type="common">Bovine</name>
    <dbReference type="NCBI Taxonomy" id="9913"/>
    <lineage>
        <taxon>Eukaryota</taxon>
        <taxon>Metazoa</taxon>
        <taxon>Chordata</taxon>
        <taxon>Craniata</taxon>
        <taxon>Vertebrata</taxon>
        <taxon>Euteleostomi</taxon>
        <taxon>Mammalia</taxon>
        <taxon>Eutheria</taxon>
        <taxon>Laurasiatheria</taxon>
        <taxon>Artiodactyla</taxon>
        <taxon>Ruminantia</taxon>
        <taxon>Pecora</taxon>
        <taxon>Bovidae</taxon>
        <taxon>Bovinae</taxon>
        <taxon>Bos</taxon>
    </lineage>
</organism>
<gene>
    <name type="primary">CBY2</name>
    <name type="synonym">SPERT</name>
</gene>
<proteinExistence type="evidence at transcript level"/>
<sequence>MSPLECSECFGDQLLHRTYTWHLTLHSRPNFTRKRDTRSESLEIPINVVLPQRGTAEPFLRLHNLYPTPRCARQAALPRLSRRVVSQHSYPLNRFSSVPLDPMERPTSQADLELDYNPPRVQLSDEMFVFQDGRWVSENCRLQSPYFSPSSSFHHKLHHKRLAKECLLQENKTLREENRALREENRMLRKENKILQVFWEEHQAALGRDDSRASSPLLHKDNASSLEAMKKETALQAHRGRENSTLQLLREENRALQQLLEQRKAYWAQPDEKAASTEEIKPISSPHEEPHGLLPDPGPGLPSPFEEPKGLPAPPDDSKTLRALREMVSTLSAQPGEEVGKGGPGLPDGSQSLELLREMNQALQALREENQSLQVLRDENRLLQEENRALHALREEHRLFQEENKALWENNKLKLQQKLVIDTVTEVTARMEMLIEELYAFMPAKSKDPKKPSRV</sequence>
<feature type="chain" id="PRO_0000307290" description="Protein chibby homolog 2">
    <location>
        <begin position="1"/>
        <end position="455"/>
    </location>
</feature>
<feature type="region of interest" description="Disordered" evidence="4">
    <location>
        <begin position="267"/>
        <end position="318"/>
    </location>
</feature>
<feature type="coiled-coil region" evidence="3">
    <location>
        <begin position="160"/>
        <end position="197"/>
    </location>
</feature>
<feature type="coiled-coil region" evidence="3">
    <location>
        <begin position="240"/>
        <end position="266"/>
    </location>
</feature>
<feature type="coiled-coil region" evidence="3">
    <location>
        <begin position="350"/>
        <end position="421"/>
    </location>
</feature>
<feature type="compositionally biased region" description="Basic and acidic residues" evidence="4">
    <location>
        <begin position="270"/>
        <end position="291"/>
    </location>
</feature>
<feature type="modified residue" description="Phosphoserine" evidence="2">
    <location>
        <position position="41"/>
    </location>
</feature>
<feature type="modified residue" description="Phosphoserine" evidence="2">
    <location>
        <position position="86"/>
    </location>
</feature>
<feature type="modified residue" description="Phosphoserine" evidence="2">
    <location>
        <position position="89"/>
    </location>
</feature>
<feature type="modified residue" description="Phosphoserine" evidence="2">
    <location>
        <position position="97"/>
    </location>
</feature>
<feature type="modified residue" description="Phosphoserine" evidence="2">
    <location>
        <position position="124"/>
    </location>
</feature>
<feature type="modified residue" description="Phosphoserine" evidence="2">
    <location>
        <position position="144"/>
    </location>
</feature>
<feature type="modified residue" description="Phosphoserine" evidence="2">
    <location>
        <position position="148"/>
    </location>
</feature>
<feature type="modified residue" description="Phosphoserine" evidence="2">
    <location>
        <position position="150"/>
    </location>
</feature>
<feature type="modified residue" description="Phosphoserine" evidence="2">
    <location>
        <position position="211"/>
    </location>
</feature>
<feature type="modified residue" description="Phosphoserine" evidence="2">
    <location>
        <position position="225"/>
    </location>
</feature>
<feature type="modified residue" description="Phosphoserine" evidence="2">
    <location>
        <position position="276"/>
    </location>
</feature>
<feature type="modified residue" description="Phosphoserine" evidence="2">
    <location>
        <position position="332"/>
    </location>
</feature>
<feature type="splice variant" id="VSP_028671" description="In isoform 2." evidence="5">
    <location>
        <begin position="1"/>
        <end position="34"/>
    </location>
</feature>
<feature type="splice variant" id="VSP_028672" description="In isoform 2." evidence="5">
    <original>RDTRSESLEIPINVVLPQ</original>
    <variation>MAVQPEGLKCRVEESNAE</variation>
    <location>
        <begin position="35"/>
        <end position="52"/>
    </location>
</feature>
<comment type="subunit">
    <text evidence="1">Homodimer. Binds to NEK1 (By similarity).</text>
</comment>
<comment type="alternative products">
    <event type="alternative splicing"/>
    <isoform>
        <id>A6QQS3-1</id>
        <name>1</name>
        <sequence type="displayed"/>
    </isoform>
    <isoform>
        <id>A6QQS3-2</id>
        <name>2</name>
        <sequence type="described" ref="VSP_028671 VSP_028672"/>
    </isoform>
</comment>
<comment type="similarity">
    <text evidence="6">Belongs to the chibby family. SPERT subfamily.</text>
</comment>
<name>CBY2_BOVIN</name>
<dbReference type="EMBL" id="DT854277">
    <property type="status" value="NOT_ANNOTATED_CDS"/>
    <property type="molecule type" value="mRNA"/>
</dbReference>
<dbReference type="EMBL" id="BC149972">
    <property type="protein sequence ID" value="AAI49973.1"/>
    <property type="molecule type" value="mRNA"/>
</dbReference>
<dbReference type="RefSeq" id="NP_001095767.1">
    <molecule id="A6QQS3-2"/>
    <property type="nucleotide sequence ID" value="NM_001102297.2"/>
</dbReference>
<dbReference type="RefSeq" id="XP_005213736.1">
    <molecule id="A6QQS3-1"/>
    <property type="nucleotide sequence ID" value="XM_005213679.5"/>
</dbReference>
<dbReference type="SMR" id="A6QQS3"/>
<dbReference type="FunCoup" id="A6QQS3">
    <property type="interactions" value="147"/>
</dbReference>
<dbReference type="STRING" id="9913.ENSBTAP00000050226"/>
<dbReference type="PaxDb" id="9913-ENSBTAP00000024729"/>
<dbReference type="Ensembl" id="ENSBTAT00000053702.2">
    <molecule id="A6QQS3-2"/>
    <property type="protein sequence ID" value="ENSBTAP00000050226.1"/>
    <property type="gene ID" value="ENSBTAG00000018580.6"/>
</dbReference>
<dbReference type="GeneID" id="616053"/>
<dbReference type="KEGG" id="bta:616053"/>
<dbReference type="CTD" id="220082"/>
<dbReference type="VEuPathDB" id="HostDB:ENSBTAG00000018580"/>
<dbReference type="eggNOG" id="ENOG502S6IZ">
    <property type="taxonomic scope" value="Eukaryota"/>
</dbReference>
<dbReference type="GeneTree" id="ENSGT00940000153137"/>
<dbReference type="HOGENOM" id="CLU_041289_0_0_1"/>
<dbReference type="InParanoid" id="A6QQS3"/>
<dbReference type="OMA" id="QNEWSIW"/>
<dbReference type="OrthoDB" id="9025135at2759"/>
<dbReference type="TreeFam" id="TF324419"/>
<dbReference type="Proteomes" id="UP000009136">
    <property type="component" value="Chromosome 12"/>
</dbReference>
<dbReference type="Bgee" id="ENSBTAG00000018580">
    <property type="expression patterns" value="Expressed in spermatid and 12 other cell types or tissues"/>
</dbReference>
<dbReference type="InterPro" id="IPR028118">
    <property type="entry name" value="Chibby_fam"/>
</dbReference>
<dbReference type="PANTHER" id="PTHR21533">
    <property type="entry name" value="LEUCINE-RICH PROTEIN"/>
    <property type="match status" value="1"/>
</dbReference>
<dbReference type="PANTHER" id="PTHR21533:SF13">
    <property type="entry name" value="PROTEIN CHIBBY HOMOLOG 2"/>
    <property type="match status" value="1"/>
</dbReference>
<dbReference type="Pfam" id="PF14645">
    <property type="entry name" value="Chibby"/>
    <property type="match status" value="1"/>
</dbReference>
<accession>A6QQS3</accession>
<protein>
    <recommendedName>
        <fullName evidence="6">Protein chibby homolog 2</fullName>
    </recommendedName>
    <alternativeName>
        <fullName>Spermatid-associated protein</fullName>
    </alternativeName>
</protein>
<evidence type="ECO:0000250" key="1"/>
<evidence type="ECO:0000250" key="2">
    <source>
        <dbReference type="UniProtKB" id="Q6AXV6"/>
    </source>
</evidence>
<evidence type="ECO:0000255" key="3"/>
<evidence type="ECO:0000256" key="4">
    <source>
        <dbReference type="SAM" id="MobiDB-lite"/>
    </source>
</evidence>
<evidence type="ECO:0000303" key="5">
    <source ref="2"/>
</evidence>
<evidence type="ECO:0000305" key="6"/>